<accession>P0A8A1</accession>
<accession>P24237</accession>
<proteinExistence type="inferred from homology"/>
<reference key="1">
    <citation type="journal article" date="2003" name="Infect. Immun.">
        <title>Complete genome sequence and comparative genomics of Shigella flexneri serotype 2a strain 2457T.</title>
        <authorList>
            <person name="Wei J."/>
            <person name="Goldberg M.B."/>
            <person name="Burland V."/>
            <person name="Venkatesan M.M."/>
            <person name="Deng W."/>
            <person name="Fournier G."/>
            <person name="Mayhew G.F."/>
            <person name="Plunkett G. III"/>
            <person name="Rose D.J."/>
            <person name="Darling A."/>
            <person name="Mau B."/>
            <person name="Perna N.T."/>
            <person name="Payne S.M."/>
            <person name="Runyen-Janecky L.J."/>
            <person name="Zhou S."/>
            <person name="Schwartz D.C."/>
            <person name="Blattner F.R."/>
        </authorList>
    </citation>
    <scope>NUCLEOTIDE SEQUENCE [LARGE SCALE GENOMIC DNA]</scope>
    <source>
        <strain>ATCC 700930 / 2457T / Serotype 2a</strain>
    </source>
</reference>
<protein>
    <recommendedName>
        <fullName evidence="1">Probable transcriptional regulatory protein YebC</fullName>
    </recommendedName>
</protein>
<dbReference type="EMBL" id="AE014073">
    <property type="protein sequence ID" value="AAP17254.1"/>
    <property type="molecule type" value="Genomic_DNA"/>
</dbReference>
<dbReference type="RefSeq" id="WP_000907248.1">
    <property type="nucleotide sequence ID" value="NZ_WPGW01000041.1"/>
</dbReference>
<dbReference type="SMR" id="P0A8A1"/>
<dbReference type="KEGG" id="sfx:S1940"/>
<dbReference type="PATRIC" id="fig|623.156.peg.45"/>
<dbReference type="HOGENOM" id="CLU_062974_2_2_6"/>
<dbReference type="Proteomes" id="UP000002673">
    <property type="component" value="Chromosome"/>
</dbReference>
<dbReference type="GO" id="GO:0005829">
    <property type="term" value="C:cytosol"/>
    <property type="evidence" value="ECO:0007669"/>
    <property type="project" value="TreeGrafter"/>
</dbReference>
<dbReference type="GO" id="GO:0003677">
    <property type="term" value="F:DNA binding"/>
    <property type="evidence" value="ECO:0007669"/>
    <property type="project" value="UniProtKB-UniRule"/>
</dbReference>
<dbReference type="GO" id="GO:0006355">
    <property type="term" value="P:regulation of DNA-templated transcription"/>
    <property type="evidence" value="ECO:0007669"/>
    <property type="project" value="UniProtKB-UniRule"/>
</dbReference>
<dbReference type="FunFam" id="1.10.10.200:FF:000001">
    <property type="entry name" value="Probable transcriptional regulatory protein YebC"/>
    <property type="match status" value="1"/>
</dbReference>
<dbReference type="FunFam" id="3.30.70.980:FF:000002">
    <property type="entry name" value="Probable transcriptional regulatory protein YebC"/>
    <property type="match status" value="1"/>
</dbReference>
<dbReference type="Gene3D" id="1.10.10.200">
    <property type="match status" value="1"/>
</dbReference>
<dbReference type="Gene3D" id="3.30.70.980">
    <property type="match status" value="2"/>
</dbReference>
<dbReference type="HAMAP" id="MF_00693">
    <property type="entry name" value="Transcrip_reg_TACO1"/>
    <property type="match status" value="1"/>
</dbReference>
<dbReference type="InterPro" id="IPR017856">
    <property type="entry name" value="Integrase-like_N"/>
</dbReference>
<dbReference type="InterPro" id="IPR048300">
    <property type="entry name" value="TACO1_YebC-like_2nd/3rd_dom"/>
</dbReference>
<dbReference type="InterPro" id="IPR049083">
    <property type="entry name" value="TACO1_YebC_N"/>
</dbReference>
<dbReference type="InterPro" id="IPR002876">
    <property type="entry name" value="Transcrip_reg_TACO1-like"/>
</dbReference>
<dbReference type="InterPro" id="IPR026564">
    <property type="entry name" value="Transcrip_reg_TACO1-like_dom3"/>
</dbReference>
<dbReference type="InterPro" id="IPR029072">
    <property type="entry name" value="YebC-like"/>
</dbReference>
<dbReference type="NCBIfam" id="NF001030">
    <property type="entry name" value="PRK00110.1"/>
    <property type="match status" value="1"/>
</dbReference>
<dbReference type="NCBIfam" id="NF009044">
    <property type="entry name" value="PRK12378.1"/>
    <property type="match status" value="1"/>
</dbReference>
<dbReference type="NCBIfam" id="TIGR01033">
    <property type="entry name" value="YebC/PmpR family DNA-binding transcriptional regulator"/>
    <property type="match status" value="1"/>
</dbReference>
<dbReference type="PANTHER" id="PTHR12532:SF6">
    <property type="entry name" value="TRANSCRIPTIONAL REGULATORY PROTEIN YEBC-RELATED"/>
    <property type="match status" value="1"/>
</dbReference>
<dbReference type="PANTHER" id="PTHR12532">
    <property type="entry name" value="TRANSLATIONAL ACTIVATOR OF CYTOCHROME C OXIDASE 1"/>
    <property type="match status" value="1"/>
</dbReference>
<dbReference type="Pfam" id="PF20772">
    <property type="entry name" value="TACO1_YebC_N"/>
    <property type="match status" value="1"/>
</dbReference>
<dbReference type="Pfam" id="PF01709">
    <property type="entry name" value="Transcrip_reg"/>
    <property type="match status" value="1"/>
</dbReference>
<dbReference type="SUPFAM" id="SSF75625">
    <property type="entry name" value="YebC-like"/>
    <property type="match status" value="1"/>
</dbReference>
<organism>
    <name type="scientific">Shigella flexneri</name>
    <dbReference type="NCBI Taxonomy" id="623"/>
    <lineage>
        <taxon>Bacteria</taxon>
        <taxon>Pseudomonadati</taxon>
        <taxon>Pseudomonadota</taxon>
        <taxon>Gammaproteobacteria</taxon>
        <taxon>Enterobacterales</taxon>
        <taxon>Enterobacteriaceae</taxon>
        <taxon>Shigella</taxon>
    </lineage>
</organism>
<evidence type="ECO:0000255" key="1">
    <source>
        <dbReference type="HAMAP-Rule" id="MF_00693"/>
    </source>
</evidence>
<evidence type="ECO:0000256" key="2">
    <source>
        <dbReference type="SAM" id="MobiDB-lite"/>
    </source>
</evidence>
<feature type="chain" id="PRO_0000175802" description="Probable transcriptional regulatory protein YebC">
    <location>
        <begin position="1"/>
        <end position="246"/>
    </location>
</feature>
<feature type="region of interest" description="Disordered" evidence="2">
    <location>
        <begin position="1"/>
        <end position="20"/>
    </location>
</feature>
<comment type="subcellular location">
    <subcellularLocation>
        <location evidence="1">Cytoplasm</location>
    </subcellularLocation>
</comment>
<comment type="similarity">
    <text evidence="1">Belongs to the TACO1 family.</text>
</comment>
<gene>
    <name evidence="1" type="primary">yebC</name>
    <name type="ordered locus">S1940</name>
</gene>
<name>YEBC_SHIFL</name>
<sequence>MAGHSKWANTRHRKAAQDAKRGKIFTKIIRELVTAAKLGGGDPDANPRLRAAVDKALSNNMTRDTLNRAIARGVGGDDDANMETIIYEGYGPGGTAIMIECLSDNRNRTVAEVRHAFSKCGGNLGTDGSVAYLFSKKGVISFEKGDEDTIMEAALEAGAEDVVTYDDGAIDVYTAWEEMGKVRDALEAAGLKADSAEVSMIPSTKADMDAETAPKLMRLIDMLEDCDDVQEVYHNGEISDEVAATL</sequence>
<keyword id="KW-0963">Cytoplasm</keyword>
<keyword id="KW-0238">DNA-binding</keyword>
<keyword id="KW-0804">Transcription</keyword>
<keyword id="KW-0805">Transcription regulation</keyword>